<dbReference type="EC" id="6.2.1.3" evidence="7 8"/>
<dbReference type="EC" id="6.2.1.15" evidence="2"/>
<dbReference type="EC" id="6.2.1.24" evidence="2"/>
<dbReference type="EMBL" id="D10040">
    <property type="protein sequence ID" value="BAA00931.1"/>
    <property type="molecule type" value="mRNA"/>
</dbReference>
<dbReference type="EMBL" id="L09229">
    <property type="protein sequence ID" value="AAB00959.1"/>
    <property type="molecule type" value="mRNA"/>
</dbReference>
<dbReference type="EMBL" id="AK096117">
    <property type="protein sequence ID" value="BAC04704.1"/>
    <property type="status" value="ALT_INIT"/>
    <property type="molecule type" value="mRNA"/>
</dbReference>
<dbReference type="EMBL" id="AK296826">
    <property type="protein sequence ID" value="BAH12438.1"/>
    <property type="molecule type" value="mRNA"/>
</dbReference>
<dbReference type="EMBL" id="AC079257">
    <property type="status" value="NOT_ANNOTATED_CDS"/>
    <property type="molecule type" value="Genomic_DNA"/>
</dbReference>
<dbReference type="EMBL" id="AC084871">
    <property type="status" value="NOT_ANNOTATED_CDS"/>
    <property type="molecule type" value="Genomic_DNA"/>
</dbReference>
<dbReference type="EMBL" id="CH471056">
    <property type="protein sequence ID" value="EAX04662.1"/>
    <property type="molecule type" value="Genomic_DNA"/>
</dbReference>
<dbReference type="EMBL" id="CH471056">
    <property type="protein sequence ID" value="EAX04663.1"/>
    <property type="molecule type" value="Genomic_DNA"/>
</dbReference>
<dbReference type="EMBL" id="CH471056">
    <property type="protein sequence ID" value="EAX04665.1"/>
    <property type="molecule type" value="Genomic_DNA"/>
</dbReference>
<dbReference type="EMBL" id="BC026290">
    <property type="protein sequence ID" value="AAH26290.1"/>
    <property type="molecule type" value="mRNA"/>
</dbReference>
<dbReference type="EMBL" id="BC050073">
    <property type="protein sequence ID" value="AAH50073.1"/>
    <property type="molecule type" value="mRNA"/>
</dbReference>
<dbReference type="CCDS" id="CCDS3839.1">
    <molecule id="P33121-1"/>
</dbReference>
<dbReference type="CCDS" id="CCDS68826.1">
    <molecule id="P33121-3"/>
</dbReference>
<dbReference type="PIR" id="JX0202">
    <property type="entry name" value="JX0202"/>
</dbReference>
<dbReference type="RefSeq" id="NP_001273637.1">
    <molecule id="P33121-1"/>
    <property type="nucleotide sequence ID" value="NM_001286708.2"/>
</dbReference>
<dbReference type="RefSeq" id="NP_001273639.1">
    <molecule id="P33121-3"/>
    <property type="nucleotide sequence ID" value="NM_001286710.2"/>
</dbReference>
<dbReference type="RefSeq" id="NP_001273640.1">
    <property type="nucleotide sequence ID" value="NM_001286711.1"/>
</dbReference>
<dbReference type="RefSeq" id="NP_001273641.1">
    <property type="nucleotide sequence ID" value="NM_001286712.1"/>
</dbReference>
<dbReference type="RefSeq" id="NP_001368806.1">
    <molecule id="P33121-1"/>
    <property type="nucleotide sequence ID" value="NM_001381877.1"/>
</dbReference>
<dbReference type="RefSeq" id="NP_001368807.1">
    <molecule id="P33121-1"/>
    <property type="nucleotide sequence ID" value="NM_001381878.1"/>
</dbReference>
<dbReference type="RefSeq" id="NP_001368808.1">
    <molecule id="P33121-1"/>
    <property type="nucleotide sequence ID" value="NM_001381879.1"/>
</dbReference>
<dbReference type="RefSeq" id="NP_001368809.1">
    <molecule id="P33121-1"/>
    <property type="nucleotide sequence ID" value="NM_001381880.1"/>
</dbReference>
<dbReference type="RefSeq" id="NP_001368810.1">
    <molecule id="P33121-1"/>
    <property type="nucleotide sequence ID" value="NM_001381881.1"/>
</dbReference>
<dbReference type="RefSeq" id="NP_001368811.1">
    <molecule id="P33121-1"/>
    <property type="nucleotide sequence ID" value="NM_001381882.1"/>
</dbReference>
<dbReference type="RefSeq" id="NP_001368812.1">
    <molecule id="P33121-1"/>
    <property type="nucleotide sequence ID" value="NM_001381883.1"/>
</dbReference>
<dbReference type="RefSeq" id="NP_001368813.1">
    <molecule id="P33121-3"/>
    <property type="nucleotide sequence ID" value="NM_001381884.1"/>
</dbReference>
<dbReference type="RefSeq" id="NP_001368814.1">
    <molecule id="P33121-3"/>
    <property type="nucleotide sequence ID" value="NM_001381885.1"/>
</dbReference>
<dbReference type="RefSeq" id="NP_001368815.1">
    <molecule id="P33121-3"/>
    <property type="nucleotide sequence ID" value="NM_001381886.1"/>
</dbReference>
<dbReference type="RefSeq" id="NP_001368816.1">
    <molecule id="P33121-3"/>
    <property type="nucleotide sequence ID" value="NM_001381887.1"/>
</dbReference>
<dbReference type="RefSeq" id="NP_001986.2">
    <molecule id="P33121-1"/>
    <property type="nucleotide sequence ID" value="NM_001995.3"/>
</dbReference>
<dbReference type="RefSeq" id="XP_005262885.1">
    <property type="nucleotide sequence ID" value="XM_005262828.1"/>
</dbReference>
<dbReference type="RefSeq" id="XP_005262886.1">
    <property type="nucleotide sequence ID" value="XM_005262829.1"/>
</dbReference>
<dbReference type="RefSeq" id="XP_005262888.1">
    <property type="nucleotide sequence ID" value="XM_005262831.1"/>
</dbReference>
<dbReference type="RefSeq" id="XP_011530044.1">
    <property type="nucleotide sequence ID" value="XM_011531742.1"/>
</dbReference>
<dbReference type="RefSeq" id="XP_016863376.1">
    <molecule id="P33121-1"/>
    <property type="nucleotide sequence ID" value="XM_017007887.2"/>
</dbReference>
<dbReference type="RefSeq" id="XP_016863377.1">
    <property type="nucleotide sequence ID" value="XM_017007888.1"/>
</dbReference>
<dbReference type="RefSeq" id="XP_016863378.1">
    <property type="nucleotide sequence ID" value="XM_017007889.1"/>
</dbReference>
<dbReference type="RefSeq" id="XP_047305775.1">
    <molecule id="P33121-3"/>
    <property type="nucleotide sequence ID" value="XM_047449819.1"/>
</dbReference>
<dbReference type="RefSeq" id="XP_054205230.1">
    <molecule id="P33121-3"/>
    <property type="nucleotide sequence ID" value="XM_054349255.1"/>
</dbReference>
<dbReference type="RefSeq" id="XP_054205231.1">
    <molecule id="P33121-1"/>
    <property type="nucleotide sequence ID" value="XM_054349256.1"/>
</dbReference>
<dbReference type="SMR" id="P33121"/>
<dbReference type="BioGRID" id="108476">
    <property type="interactions" value="134"/>
</dbReference>
<dbReference type="FunCoup" id="P33121">
    <property type="interactions" value="1715"/>
</dbReference>
<dbReference type="IntAct" id="P33121">
    <property type="interactions" value="43"/>
</dbReference>
<dbReference type="MINT" id="P33121"/>
<dbReference type="STRING" id="9606.ENSP00000422607"/>
<dbReference type="BindingDB" id="P33121"/>
<dbReference type="ChEMBL" id="CHEMBL4295746"/>
<dbReference type="DrugBank" id="DB00131">
    <property type="generic name" value="Adenosine phosphate"/>
</dbReference>
<dbReference type="DrugBank" id="DB00171">
    <property type="generic name" value="ATP"/>
</dbReference>
<dbReference type="SwissLipids" id="SLP:000000199"/>
<dbReference type="SwissLipids" id="SLP:000001468">
    <molecule id="P33121-1"/>
</dbReference>
<dbReference type="GlyCosmos" id="P33121">
    <property type="glycosylation" value="1 site, No reported glycans"/>
</dbReference>
<dbReference type="GlyGen" id="P33121">
    <property type="glycosylation" value="4 sites, 1 N-linked glycan (1 site), 1 O-linked glycan (2 sites)"/>
</dbReference>
<dbReference type="iPTMnet" id="P33121"/>
<dbReference type="PhosphoSitePlus" id="P33121"/>
<dbReference type="SwissPalm" id="P33121"/>
<dbReference type="BioMuta" id="ACSL1"/>
<dbReference type="DMDM" id="417241"/>
<dbReference type="CPTAC" id="CPTAC-305"/>
<dbReference type="CPTAC" id="CPTAC-306"/>
<dbReference type="jPOST" id="P33121"/>
<dbReference type="MassIVE" id="P33121"/>
<dbReference type="PaxDb" id="9606-ENSP00000422607"/>
<dbReference type="PeptideAtlas" id="P33121"/>
<dbReference type="ProteomicsDB" id="54898">
    <molecule id="P33121-1"/>
</dbReference>
<dbReference type="ProteomicsDB" id="54899">
    <molecule id="P33121-2"/>
</dbReference>
<dbReference type="ProteomicsDB" id="6570"/>
<dbReference type="Pumba" id="P33121"/>
<dbReference type="Antibodypedia" id="1946">
    <property type="antibodies" value="306 antibodies from 35 providers"/>
</dbReference>
<dbReference type="DNASU" id="2180"/>
<dbReference type="Ensembl" id="ENST00000281455.7">
    <molecule id="P33121-1"/>
    <property type="protein sequence ID" value="ENSP00000281455.2"/>
    <property type="gene ID" value="ENSG00000151726.16"/>
</dbReference>
<dbReference type="Ensembl" id="ENST00000503407.6">
    <molecule id="P33121-2"/>
    <property type="protein sequence ID" value="ENSP00000425098.2"/>
    <property type="gene ID" value="ENSG00000151726.16"/>
</dbReference>
<dbReference type="Ensembl" id="ENST00000504342.5">
    <molecule id="P33121-1"/>
    <property type="protein sequence ID" value="ENSP00000425006.1"/>
    <property type="gene ID" value="ENSG00000151726.16"/>
</dbReference>
<dbReference type="Ensembl" id="ENST00000513317.5">
    <molecule id="P33121-3"/>
    <property type="protein sequence ID" value="ENSP00000426150.1"/>
    <property type="gene ID" value="ENSG00000151726.16"/>
</dbReference>
<dbReference type="Ensembl" id="ENST00000515030.5">
    <molecule id="P33121-1"/>
    <property type="protein sequence ID" value="ENSP00000422607.1"/>
    <property type="gene ID" value="ENSG00000151726.16"/>
</dbReference>
<dbReference type="Ensembl" id="ENST00000706366.1">
    <molecule id="P33121-3"/>
    <property type="protein sequence ID" value="ENSP00000516351.1"/>
    <property type="gene ID" value="ENSG00000151726.16"/>
</dbReference>
<dbReference type="Ensembl" id="ENST00000706367.1">
    <molecule id="P33121-1"/>
    <property type="protein sequence ID" value="ENSP00000516352.1"/>
    <property type="gene ID" value="ENSG00000151726.16"/>
</dbReference>
<dbReference type="Ensembl" id="ENST00000706368.1">
    <molecule id="P33121-3"/>
    <property type="protein sequence ID" value="ENSP00000516353.1"/>
    <property type="gene ID" value="ENSG00000151726.16"/>
</dbReference>
<dbReference type="Ensembl" id="ENST00000706369.1">
    <molecule id="P33121-1"/>
    <property type="protein sequence ID" value="ENSP00000516354.1"/>
    <property type="gene ID" value="ENSG00000151726.16"/>
</dbReference>
<dbReference type="GeneID" id="2180"/>
<dbReference type="KEGG" id="hsa:2180"/>
<dbReference type="MANE-Select" id="ENST00000281455.7">
    <property type="protein sequence ID" value="ENSP00000281455.2"/>
    <property type="RefSeq nucleotide sequence ID" value="NM_001995.5"/>
    <property type="RefSeq protein sequence ID" value="NP_001986.2"/>
</dbReference>
<dbReference type="UCSC" id="uc003iwt.2">
    <molecule id="P33121-1"/>
    <property type="organism name" value="human"/>
</dbReference>
<dbReference type="AGR" id="HGNC:3569"/>
<dbReference type="CTD" id="2180"/>
<dbReference type="DisGeNET" id="2180"/>
<dbReference type="GeneCards" id="ACSL1"/>
<dbReference type="HGNC" id="HGNC:3569">
    <property type="gene designation" value="ACSL1"/>
</dbReference>
<dbReference type="HPA" id="ENSG00000151726">
    <property type="expression patterns" value="Tissue enhanced (adipose tissue, liver, skeletal muscle)"/>
</dbReference>
<dbReference type="MIM" id="152425">
    <property type="type" value="gene"/>
</dbReference>
<dbReference type="neXtProt" id="NX_P33121"/>
<dbReference type="OpenTargets" id="ENSG00000151726"/>
<dbReference type="PharmGKB" id="PA27966"/>
<dbReference type="VEuPathDB" id="HostDB:ENSG00000151726"/>
<dbReference type="eggNOG" id="KOG1256">
    <property type="taxonomic scope" value="Eukaryota"/>
</dbReference>
<dbReference type="GeneTree" id="ENSGT00940000154508"/>
<dbReference type="InParanoid" id="P33121"/>
<dbReference type="OMA" id="WYHSIGL"/>
<dbReference type="OrthoDB" id="1700726at2759"/>
<dbReference type="PAN-GO" id="P33121">
    <property type="GO annotations" value="6 GO annotations based on evolutionary models"/>
</dbReference>
<dbReference type="PhylomeDB" id="P33121"/>
<dbReference type="TreeFam" id="TF313877"/>
<dbReference type="BioCyc" id="MetaCyc:HS07766-MONOMER"/>
<dbReference type="BRENDA" id="6.2.1.3">
    <property type="organism ID" value="2681"/>
</dbReference>
<dbReference type="PathwayCommons" id="P33121"/>
<dbReference type="Reactome" id="R-HSA-1989781">
    <property type="pathway name" value="PPARA activates gene expression"/>
</dbReference>
<dbReference type="Reactome" id="R-HSA-2046105">
    <property type="pathway name" value="Linoleic acid (LA) metabolism"/>
</dbReference>
<dbReference type="Reactome" id="R-HSA-2046106">
    <property type="pathway name" value="alpha-linolenic acid (ALA) metabolism"/>
</dbReference>
<dbReference type="Reactome" id="R-HSA-75876">
    <property type="pathway name" value="Synthesis of very long-chain fatty acyl-CoAs"/>
</dbReference>
<dbReference type="Reactome" id="R-HSA-9841922">
    <property type="pathway name" value="MLL4 and MLL3 complexes regulate expression of PPARG target genes in adipogenesis and hepatic steatosis"/>
</dbReference>
<dbReference type="SignaLink" id="P33121"/>
<dbReference type="SIGNOR" id="P33121"/>
<dbReference type="BioGRID-ORCS" id="2180">
    <property type="hits" value="17 hits in 1165 CRISPR screens"/>
</dbReference>
<dbReference type="ChiTaRS" id="ACSL1">
    <property type="organism name" value="human"/>
</dbReference>
<dbReference type="GeneWiki" id="ACSL1"/>
<dbReference type="GenomeRNAi" id="2180"/>
<dbReference type="Pharos" id="P33121">
    <property type="development level" value="Tchem"/>
</dbReference>
<dbReference type="PRO" id="PR:P33121"/>
<dbReference type="Proteomes" id="UP000005640">
    <property type="component" value="Chromosome 4"/>
</dbReference>
<dbReference type="RNAct" id="P33121">
    <property type="molecule type" value="protein"/>
</dbReference>
<dbReference type="Bgee" id="ENSG00000151726">
    <property type="expression patterns" value="Expressed in right lobe of liver and 203 other cell types or tissues"/>
</dbReference>
<dbReference type="ExpressionAtlas" id="P33121">
    <property type="expression patterns" value="baseline and differential"/>
</dbReference>
<dbReference type="GO" id="GO:0005783">
    <property type="term" value="C:endoplasmic reticulum"/>
    <property type="evidence" value="ECO:0000314"/>
    <property type="project" value="UniProtKB"/>
</dbReference>
<dbReference type="GO" id="GO:0005789">
    <property type="term" value="C:endoplasmic reticulum membrane"/>
    <property type="evidence" value="ECO:0000304"/>
    <property type="project" value="Reactome"/>
</dbReference>
<dbReference type="GO" id="GO:0016020">
    <property type="term" value="C:membrane"/>
    <property type="evidence" value="ECO:0007005"/>
    <property type="project" value="UniProtKB"/>
</dbReference>
<dbReference type="GO" id="GO:0005741">
    <property type="term" value="C:mitochondrial outer membrane"/>
    <property type="evidence" value="ECO:0000304"/>
    <property type="project" value="Reactome"/>
</dbReference>
<dbReference type="GO" id="GO:0005739">
    <property type="term" value="C:mitochondrion"/>
    <property type="evidence" value="ECO:0000314"/>
    <property type="project" value="UniProtKB"/>
</dbReference>
<dbReference type="GO" id="GO:0005778">
    <property type="term" value="C:peroxisomal membrane"/>
    <property type="evidence" value="ECO:0007669"/>
    <property type="project" value="UniProtKB-SubCell"/>
</dbReference>
<dbReference type="GO" id="GO:0047676">
    <property type="term" value="F:arachidonate-CoA ligase activity"/>
    <property type="evidence" value="ECO:0000250"/>
    <property type="project" value="UniProtKB"/>
</dbReference>
<dbReference type="GO" id="GO:0005524">
    <property type="term" value="F:ATP binding"/>
    <property type="evidence" value="ECO:0007669"/>
    <property type="project" value="UniProtKB-KW"/>
</dbReference>
<dbReference type="GO" id="GO:0004467">
    <property type="term" value="F:long-chain fatty acid-CoA ligase activity"/>
    <property type="evidence" value="ECO:0000314"/>
    <property type="project" value="UniProtKB"/>
</dbReference>
<dbReference type="GO" id="GO:0090434">
    <property type="term" value="F:oleoyl-CoA ligase activity"/>
    <property type="evidence" value="ECO:0000250"/>
    <property type="project" value="ARUK-UCL"/>
</dbReference>
<dbReference type="GO" id="GO:0090433">
    <property type="term" value="F:palmitoyl-CoA ligase activity"/>
    <property type="evidence" value="ECO:0007669"/>
    <property type="project" value="Ensembl"/>
</dbReference>
<dbReference type="GO" id="GO:0050197">
    <property type="term" value="F:phytanate-CoA ligase activity"/>
    <property type="evidence" value="ECO:0000250"/>
    <property type="project" value="UniProtKB"/>
</dbReference>
<dbReference type="GO" id="GO:0070251">
    <property type="term" value="F:pristanate-CoA ligase activity"/>
    <property type="evidence" value="ECO:0007669"/>
    <property type="project" value="RHEA"/>
</dbReference>
<dbReference type="GO" id="GO:0043539">
    <property type="term" value="F:protein serine/threonine kinase activator activity"/>
    <property type="evidence" value="ECO:0007669"/>
    <property type="project" value="Ensembl"/>
</dbReference>
<dbReference type="GO" id="GO:0033211">
    <property type="term" value="P:adiponectin-activated signaling pathway"/>
    <property type="evidence" value="ECO:0007669"/>
    <property type="project" value="Ensembl"/>
</dbReference>
<dbReference type="GO" id="GO:0006633">
    <property type="term" value="P:fatty acid biosynthetic process"/>
    <property type="evidence" value="ECO:0007669"/>
    <property type="project" value="Ensembl"/>
</dbReference>
<dbReference type="GO" id="GO:0015908">
    <property type="term" value="P:fatty acid transport"/>
    <property type="evidence" value="ECO:0000315"/>
    <property type="project" value="ARUK-UCL"/>
</dbReference>
<dbReference type="GO" id="GO:0043651">
    <property type="term" value="P:linoleic acid metabolic process"/>
    <property type="evidence" value="ECO:0007669"/>
    <property type="project" value="Ensembl"/>
</dbReference>
<dbReference type="GO" id="GO:0008610">
    <property type="term" value="P:lipid biosynthetic process"/>
    <property type="evidence" value="ECO:0000314"/>
    <property type="project" value="UniProtKB"/>
</dbReference>
<dbReference type="GO" id="GO:0044539">
    <property type="term" value="P:long-chain fatty acid import into cell"/>
    <property type="evidence" value="ECO:0000314"/>
    <property type="project" value="UniProtKB"/>
</dbReference>
<dbReference type="GO" id="GO:0001676">
    <property type="term" value="P:long-chain fatty acid metabolic process"/>
    <property type="evidence" value="ECO:0000314"/>
    <property type="project" value="UniProtKB"/>
</dbReference>
<dbReference type="GO" id="GO:0035338">
    <property type="term" value="P:long-chain fatty-acyl-CoA biosynthetic process"/>
    <property type="evidence" value="ECO:0000318"/>
    <property type="project" value="GO_Central"/>
</dbReference>
<dbReference type="GO" id="GO:0120162">
    <property type="term" value="P:positive regulation of cold-induced thermogenesis"/>
    <property type="evidence" value="ECO:0000250"/>
    <property type="project" value="YuBioLab"/>
</dbReference>
<dbReference type="GO" id="GO:0010747">
    <property type="term" value="P:positive regulation of long-chain fatty acid import across plasma membrane"/>
    <property type="evidence" value="ECO:0000250"/>
    <property type="project" value="ARUK-UCL"/>
</dbReference>
<dbReference type="GO" id="GO:0007584">
    <property type="term" value="P:response to nutrient"/>
    <property type="evidence" value="ECO:0007669"/>
    <property type="project" value="Ensembl"/>
</dbReference>
<dbReference type="GO" id="GO:0034201">
    <property type="term" value="P:response to oleic acid"/>
    <property type="evidence" value="ECO:0007669"/>
    <property type="project" value="Ensembl"/>
</dbReference>
<dbReference type="GO" id="GO:0019432">
    <property type="term" value="P:triglyceride biosynthetic process"/>
    <property type="evidence" value="ECO:0007669"/>
    <property type="project" value="Ensembl"/>
</dbReference>
<dbReference type="GO" id="GO:0000038">
    <property type="term" value="P:very long-chain fatty acid metabolic process"/>
    <property type="evidence" value="ECO:0000318"/>
    <property type="project" value="GO_Central"/>
</dbReference>
<dbReference type="GO" id="GO:0042178">
    <property type="term" value="P:xenobiotic catabolic process"/>
    <property type="evidence" value="ECO:0007669"/>
    <property type="project" value="Ensembl"/>
</dbReference>
<dbReference type="CDD" id="cd05927">
    <property type="entry name" value="LC-FACS_euk"/>
    <property type="match status" value="1"/>
</dbReference>
<dbReference type="FunFam" id="3.40.50.12780:FF:000006">
    <property type="entry name" value="long-chain-fatty-acid--CoA ligase 6 isoform X2"/>
    <property type="match status" value="1"/>
</dbReference>
<dbReference type="Gene3D" id="3.40.50.12780">
    <property type="entry name" value="N-terminal domain of ligase-like"/>
    <property type="match status" value="1"/>
</dbReference>
<dbReference type="InterPro" id="IPR020845">
    <property type="entry name" value="AMP-binding_CS"/>
</dbReference>
<dbReference type="InterPro" id="IPR000873">
    <property type="entry name" value="AMP-dep_synth/lig_dom"/>
</dbReference>
<dbReference type="InterPro" id="IPR042099">
    <property type="entry name" value="ANL_N_sf"/>
</dbReference>
<dbReference type="InterPro" id="IPR045311">
    <property type="entry name" value="LC-FACS_euk"/>
</dbReference>
<dbReference type="PANTHER" id="PTHR43272">
    <property type="entry name" value="LONG-CHAIN-FATTY-ACID--COA LIGASE"/>
    <property type="match status" value="1"/>
</dbReference>
<dbReference type="PANTHER" id="PTHR43272:SF28">
    <property type="entry name" value="LONG-CHAIN-FATTY-ACID--COA LIGASE 1"/>
    <property type="match status" value="1"/>
</dbReference>
<dbReference type="Pfam" id="PF00501">
    <property type="entry name" value="AMP-binding"/>
    <property type="match status" value="1"/>
</dbReference>
<dbReference type="SUPFAM" id="SSF56801">
    <property type="entry name" value="Acetyl-CoA synthetase-like"/>
    <property type="match status" value="1"/>
</dbReference>
<dbReference type="PROSITE" id="PS00455">
    <property type="entry name" value="AMP_BINDING"/>
    <property type="match status" value="1"/>
</dbReference>
<reference key="1">
    <citation type="journal article" date="1992" name="J. Biochem.">
        <title>Human long-chain acyl-CoA synthetase: structure and chromosomal location.</title>
        <authorList>
            <person name="Abe T."/>
            <person name="Fujino T."/>
            <person name="Fukuyama R."/>
            <person name="Minoshima S."/>
            <person name="Shimizu N."/>
            <person name="Toh H."/>
            <person name="Suzuki H."/>
            <person name="Yamamoto T."/>
        </authorList>
    </citation>
    <scope>NUCLEOTIDE SEQUENCE [MRNA] (ISOFORM 1)</scope>
    <source>
        <tissue>Liver</tissue>
    </source>
</reference>
<reference key="2">
    <citation type="journal article" date="1995" name="Mol. Cell. Biochem.">
        <title>Molecular cloning and sequencing of human palmitoyl-CoA ligase and its tissue specific expression.</title>
        <authorList>
            <person name="Ghosh B."/>
            <person name="Barbosa E."/>
            <person name="Singh I."/>
        </authorList>
    </citation>
    <scope>NUCLEOTIDE SEQUENCE [MRNA] (ISOFORM 1)</scope>
</reference>
<reference key="3">
    <citation type="journal article" date="2004" name="Nat. Genet.">
        <title>Complete sequencing and characterization of 21,243 full-length human cDNAs.</title>
        <authorList>
            <person name="Ota T."/>
            <person name="Suzuki Y."/>
            <person name="Nishikawa T."/>
            <person name="Otsuki T."/>
            <person name="Sugiyama T."/>
            <person name="Irie R."/>
            <person name="Wakamatsu A."/>
            <person name="Hayashi K."/>
            <person name="Sato H."/>
            <person name="Nagai K."/>
            <person name="Kimura K."/>
            <person name="Makita H."/>
            <person name="Sekine M."/>
            <person name="Obayashi M."/>
            <person name="Nishi T."/>
            <person name="Shibahara T."/>
            <person name="Tanaka T."/>
            <person name="Ishii S."/>
            <person name="Yamamoto J."/>
            <person name="Saito K."/>
            <person name="Kawai Y."/>
            <person name="Isono Y."/>
            <person name="Nakamura Y."/>
            <person name="Nagahari K."/>
            <person name="Murakami K."/>
            <person name="Yasuda T."/>
            <person name="Iwayanagi T."/>
            <person name="Wagatsuma M."/>
            <person name="Shiratori A."/>
            <person name="Sudo H."/>
            <person name="Hosoiri T."/>
            <person name="Kaku Y."/>
            <person name="Kodaira H."/>
            <person name="Kondo H."/>
            <person name="Sugawara M."/>
            <person name="Takahashi M."/>
            <person name="Kanda K."/>
            <person name="Yokoi T."/>
            <person name="Furuya T."/>
            <person name="Kikkawa E."/>
            <person name="Omura Y."/>
            <person name="Abe K."/>
            <person name="Kamihara K."/>
            <person name="Katsuta N."/>
            <person name="Sato K."/>
            <person name="Tanikawa M."/>
            <person name="Yamazaki M."/>
            <person name="Ninomiya K."/>
            <person name="Ishibashi T."/>
            <person name="Yamashita H."/>
            <person name="Murakawa K."/>
            <person name="Fujimori K."/>
            <person name="Tanai H."/>
            <person name="Kimata M."/>
            <person name="Watanabe M."/>
            <person name="Hiraoka S."/>
            <person name="Chiba Y."/>
            <person name="Ishida S."/>
            <person name="Ono Y."/>
            <person name="Takiguchi S."/>
            <person name="Watanabe S."/>
            <person name="Yosida M."/>
            <person name="Hotuta T."/>
            <person name="Kusano J."/>
            <person name="Kanehori K."/>
            <person name="Takahashi-Fujii A."/>
            <person name="Hara H."/>
            <person name="Tanase T.-O."/>
            <person name="Nomura Y."/>
            <person name="Togiya S."/>
            <person name="Komai F."/>
            <person name="Hara R."/>
            <person name="Takeuchi K."/>
            <person name="Arita M."/>
            <person name="Imose N."/>
            <person name="Musashino K."/>
            <person name="Yuuki H."/>
            <person name="Oshima A."/>
            <person name="Sasaki N."/>
            <person name="Aotsuka S."/>
            <person name="Yoshikawa Y."/>
            <person name="Matsunawa H."/>
            <person name="Ichihara T."/>
            <person name="Shiohata N."/>
            <person name="Sano S."/>
            <person name="Moriya S."/>
            <person name="Momiyama H."/>
            <person name="Satoh N."/>
            <person name="Takami S."/>
            <person name="Terashima Y."/>
            <person name="Suzuki O."/>
            <person name="Nakagawa S."/>
            <person name="Senoh A."/>
            <person name="Mizoguchi H."/>
            <person name="Goto Y."/>
            <person name="Shimizu F."/>
            <person name="Wakebe H."/>
            <person name="Hishigaki H."/>
            <person name="Watanabe T."/>
            <person name="Sugiyama A."/>
            <person name="Takemoto M."/>
            <person name="Kawakami B."/>
            <person name="Yamazaki M."/>
            <person name="Watanabe K."/>
            <person name="Kumagai A."/>
            <person name="Itakura S."/>
            <person name="Fukuzumi Y."/>
            <person name="Fujimori Y."/>
            <person name="Komiyama M."/>
            <person name="Tashiro H."/>
            <person name="Tanigami A."/>
            <person name="Fujiwara T."/>
            <person name="Ono T."/>
            <person name="Yamada K."/>
            <person name="Fujii Y."/>
            <person name="Ozaki K."/>
            <person name="Hirao M."/>
            <person name="Ohmori Y."/>
            <person name="Kawabata A."/>
            <person name="Hikiji T."/>
            <person name="Kobatake N."/>
            <person name="Inagaki H."/>
            <person name="Ikema Y."/>
            <person name="Okamoto S."/>
            <person name="Okitani R."/>
            <person name="Kawakami T."/>
            <person name="Noguchi S."/>
            <person name="Itoh T."/>
            <person name="Shigeta K."/>
            <person name="Senba T."/>
            <person name="Matsumura K."/>
            <person name="Nakajima Y."/>
            <person name="Mizuno T."/>
            <person name="Morinaga M."/>
            <person name="Sasaki M."/>
            <person name="Togashi T."/>
            <person name="Oyama M."/>
            <person name="Hata H."/>
            <person name="Watanabe M."/>
            <person name="Komatsu T."/>
            <person name="Mizushima-Sugano J."/>
            <person name="Satoh T."/>
            <person name="Shirai Y."/>
            <person name="Takahashi Y."/>
            <person name="Nakagawa K."/>
            <person name="Okumura K."/>
            <person name="Nagase T."/>
            <person name="Nomura N."/>
            <person name="Kikuchi H."/>
            <person name="Masuho Y."/>
            <person name="Yamashita R."/>
            <person name="Nakai K."/>
            <person name="Yada T."/>
            <person name="Nakamura Y."/>
            <person name="Ohara O."/>
            <person name="Isogai T."/>
            <person name="Sugano S."/>
        </authorList>
    </citation>
    <scope>NUCLEOTIDE SEQUENCE [LARGE SCALE MRNA] (ISOFORM 3)</scope>
    <scope>NUCLEOTIDE SEQUENCE [LARGE SCALE MRNA] OF 395-698 (ISOFORM 2)</scope>
</reference>
<reference key="4">
    <citation type="journal article" date="2005" name="Nature">
        <title>Generation and annotation of the DNA sequences of human chromosomes 2 and 4.</title>
        <authorList>
            <person name="Hillier L.W."/>
            <person name="Graves T.A."/>
            <person name="Fulton R.S."/>
            <person name="Fulton L.A."/>
            <person name="Pepin K.H."/>
            <person name="Minx P."/>
            <person name="Wagner-McPherson C."/>
            <person name="Layman D."/>
            <person name="Wylie K."/>
            <person name="Sekhon M."/>
            <person name="Becker M.C."/>
            <person name="Fewell G.A."/>
            <person name="Delehaunty K.D."/>
            <person name="Miner T.L."/>
            <person name="Nash W.E."/>
            <person name="Kremitzki C."/>
            <person name="Oddy L."/>
            <person name="Du H."/>
            <person name="Sun H."/>
            <person name="Bradshaw-Cordum H."/>
            <person name="Ali J."/>
            <person name="Carter J."/>
            <person name="Cordes M."/>
            <person name="Harris A."/>
            <person name="Isak A."/>
            <person name="van Brunt A."/>
            <person name="Nguyen C."/>
            <person name="Du F."/>
            <person name="Courtney L."/>
            <person name="Kalicki J."/>
            <person name="Ozersky P."/>
            <person name="Abbott S."/>
            <person name="Armstrong J."/>
            <person name="Belter E.A."/>
            <person name="Caruso L."/>
            <person name="Cedroni M."/>
            <person name="Cotton M."/>
            <person name="Davidson T."/>
            <person name="Desai A."/>
            <person name="Elliott G."/>
            <person name="Erb T."/>
            <person name="Fronick C."/>
            <person name="Gaige T."/>
            <person name="Haakenson W."/>
            <person name="Haglund K."/>
            <person name="Holmes A."/>
            <person name="Harkins R."/>
            <person name="Kim K."/>
            <person name="Kruchowski S.S."/>
            <person name="Strong C.M."/>
            <person name="Grewal N."/>
            <person name="Goyea E."/>
            <person name="Hou S."/>
            <person name="Levy A."/>
            <person name="Martinka S."/>
            <person name="Mead K."/>
            <person name="McLellan M.D."/>
            <person name="Meyer R."/>
            <person name="Randall-Maher J."/>
            <person name="Tomlinson C."/>
            <person name="Dauphin-Kohlberg S."/>
            <person name="Kozlowicz-Reilly A."/>
            <person name="Shah N."/>
            <person name="Swearengen-Shahid S."/>
            <person name="Snider J."/>
            <person name="Strong J.T."/>
            <person name="Thompson J."/>
            <person name="Yoakum M."/>
            <person name="Leonard S."/>
            <person name="Pearman C."/>
            <person name="Trani L."/>
            <person name="Radionenko M."/>
            <person name="Waligorski J.E."/>
            <person name="Wang C."/>
            <person name="Rock S.M."/>
            <person name="Tin-Wollam A.-M."/>
            <person name="Maupin R."/>
            <person name="Latreille P."/>
            <person name="Wendl M.C."/>
            <person name="Yang S.-P."/>
            <person name="Pohl C."/>
            <person name="Wallis J.W."/>
            <person name="Spieth J."/>
            <person name="Bieri T.A."/>
            <person name="Berkowicz N."/>
            <person name="Nelson J.O."/>
            <person name="Osborne J."/>
            <person name="Ding L."/>
            <person name="Meyer R."/>
            <person name="Sabo A."/>
            <person name="Shotland Y."/>
            <person name="Sinha P."/>
            <person name="Wohldmann P.E."/>
            <person name="Cook L.L."/>
            <person name="Hickenbotham M.T."/>
            <person name="Eldred J."/>
            <person name="Williams D."/>
            <person name="Jones T.A."/>
            <person name="She X."/>
            <person name="Ciccarelli F.D."/>
            <person name="Izaurralde E."/>
            <person name="Taylor J."/>
            <person name="Schmutz J."/>
            <person name="Myers R.M."/>
            <person name="Cox D.R."/>
            <person name="Huang X."/>
            <person name="McPherson J.D."/>
            <person name="Mardis E.R."/>
            <person name="Clifton S.W."/>
            <person name="Warren W.C."/>
            <person name="Chinwalla A.T."/>
            <person name="Eddy S.R."/>
            <person name="Marra M.A."/>
            <person name="Ovcharenko I."/>
            <person name="Furey T.S."/>
            <person name="Miller W."/>
            <person name="Eichler E.E."/>
            <person name="Bork P."/>
            <person name="Suyama M."/>
            <person name="Torrents D."/>
            <person name="Waterston R.H."/>
            <person name="Wilson R.K."/>
        </authorList>
    </citation>
    <scope>NUCLEOTIDE SEQUENCE [LARGE SCALE GENOMIC DNA]</scope>
</reference>
<reference key="5">
    <citation type="submission" date="2005-09" db="EMBL/GenBank/DDBJ databases">
        <authorList>
            <person name="Mural R.J."/>
            <person name="Istrail S."/>
            <person name="Sutton G.G."/>
            <person name="Florea L."/>
            <person name="Halpern A.L."/>
            <person name="Mobarry C.M."/>
            <person name="Lippert R."/>
            <person name="Walenz B."/>
            <person name="Shatkay H."/>
            <person name="Dew I."/>
            <person name="Miller J.R."/>
            <person name="Flanigan M.J."/>
            <person name="Edwards N.J."/>
            <person name="Bolanos R."/>
            <person name="Fasulo D."/>
            <person name="Halldorsson B.V."/>
            <person name="Hannenhalli S."/>
            <person name="Turner R."/>
            <person name="Yooseph S."/>
            <person name="Lu F."/>
            <person name="Nusskern D.R."/>
            <person name="Shue B.C."/>
            <person name="Zheng X.H."/>
            <person name="Zhong F."/>
            <person name="Delcher A.L."/>
            <person name="Huson D.H."/>
            <person name="Kravitz S.A."/>
            <person name="Mouchard L."/>
            <person name="Reinert K."/>
            <person name="Remington K.A."/>
            <person name="Clark A.G."/>
            <person name="Waterman M.S."/>
            <person name="Eichler E.E."/>
            <person name="Adams M.D."/>
            <person name="Hunkapiller M.W."/>
            <person name="Myers E.W."/>
            <person name="Venter J.C."/>
        </authorList>
    </citation>
    <scope>NUCLEOTIDE SEQUENCE [LARGE SCALE GENOMIC DNA]</scope>
</reference>
<reference key="6">
    <citation type="journal article" date="2004" name="Genome Res.">
        <title>The status, quality, and expansion of the NIH full-length cDNA project: the Mammalian Gene Collection (MGC).</title>
        <authorList>
            <consortium name="The MGC Project Team"/>
        </authorList>
    </citation>
    <scope>NUCLEOTIDE SEQUENCE [LARGE SCALE MRNA] (ISOFORM 1)</scope>
    <source>
        <tissue>Testis</tissue>
    </source>
</reference>
<reference key="7">
    <citation type="submission" date="2005-06" db="UniProtKB">
        <authorList>
            <person name="Bienvenut W.V."/>
        </authorList>
    </citation>
    <scope>PROTEIN SEQUENCE OF 1-8; 12-19; 341-349; 377-386; 562-572; 633-640 AND 655-675</scope>
    <scope>ACETYLATION AT MET-1</scope>
    <scope>IDENTIFICATION BY MASS SPECTROMETRY</scope>
    <source>
        <tissue>B-cell lymphoma</tissue>
    </source>
</reference>
<reference key="8">
    <citation type="journal article" date="1999" name="Biochem. J.">
        <title>Identification and molecular characterization of acyl-CoA synthetase in human red cells and erythroid precursor.</title>
        <authorList>
            <person name="Malhotra K.T."/>
            <person name="Malhotra K."/>
            <person name="Lubin B.H."/>
            <person name="Kuypers F.A."/>
        </authorList>
    </citation>
    <scope>TISSUE SPECIFICITY</scope>
</reference>
<reference key="9">
    <citation type="journal article" date="2011" name="BMC Syst. Biol.">
        <title>Initial characterization of the human central proteome.</title>
        <authorList>
            <person name="Burkard T.R."/>
            <person name="Planyavsky M."/>
            <person name="Kaupe I."/>
            <person name="Breitwieser F.P."/>
            <person name="Buerckstuemmer T."/>
            <person name="Bennett K.L."/>
            <person name="Superti-Furga G."/>
            <person name="Colinge J."/>
        </authorList>
    </citation>
    <scope>IDENTIFICATION BY MASS SPECTROMETRY [LARGE SCALE ANALYSIS]</scope>
</reference>
<reference key="10">
    <citation type="journal article" date="2011" name="J. Lipid Res.">
        <title>Long-chain acyl-CoA synthetase 4 modulates prostaglandin E(2) release from human arterial smooth muscle cells.</title>
        <authorList>
            <person name="Golej D.L."/>
            <person name="Askari B."/>
            <person name="Kramer F."/>
            <person name="Barnhart S."/>
            <person name="Vivekanandan-Giri A."/>
            <person name="Pennathur S."/>
            <person name="Bornfeldt K.E."/>
        </authorList>
    </citation>
    <scope>FUNCTION</scope>
    <scope>CATALYTIC ACTIVITY</scope>
</reference>
<reference key="11">
    <citation type="journal article" date="2012" name="Mol. Cell">
        <title>The Sjogren-Larsson syndrome gene encodes a hexadecenal dehydrogenase of the sphingosine 1-phosphate degradation pathway.</title>
        <authorList>
            <person name="Nakahara K."/>
            <person name="Ohkuni A."/>
            <person name="Kitamura T."/>
            <person name="Abe K."/>
            <person name="Naganuma T."/>
            <person name="Ohno Y."/>
            <person name="Zoeller R.A."/>
            <person name="Kihara A."/>
        </authorList>
    </citation>
    <scope>CATALYTIC ACTIVITY</scope>
    <scope>FUNCTION</scope>
</reference>
<reference key="12">
    <citation type="journal article" date="2013" name="Biochem. Biophys. Res. Commun.">
        <title>Identification of acyl-CoA synthetases involved in the mammalian sphingosine 1-phosphate metabolic pathway.</title>
        <authorList>
            <person name="Ohkuni A."/>
            <person name="Ohno Y."/>
            <person name="Kihara A."/>
        </authorList>
    </citation>
    <scope>CATALYTIC ACTIVITY</scope>
    <scope>FUNCTION</scope>
    <scope>SUBCELLULAR LOCATION</scope>
</reference>
<reference key="13">
    <citation type="journal article" date="2014" name="J. Proteomics">
        <title>An enzyme assisted RP-RPLC approach for in-depth analysis of human liver phosphoproteome.</title>
        <authorList>
            <person name="Bian Y."/>
            <person name="Song C."/>
            <person name="Cheng K."/>
            <person name="Dong M."/>
            <person name="Wang F."/>
            <person name="Huang J."/>
            <person name="Sun D."/>
            <person name="Wang L."/>
            <person name="Ye M."/>
            <person name="Zou H."/>
        </authorList>
    </citation>
    <scope>PHOSPHORYLATION [LARGE SCALE ANALYSIS] AT SER-620</scope>
    <scope>IDENTIFICATION BY MASS SPECTROMETRY [LARGE SCALE ANALYSIS]</scope>
    <source>
        <tissue>Liver</tissue>
    </source>
</reference>
<reference key="14">
    <citation type="journal article" date="2015" name="Proteomics">
        <title>N-terminome analysis of the human mitochondrial proteome.</title>
        <authorList>
            <person name="Vaca Jacome A.S."/>
            <person name="Rabilloud T."/>
            <person name="Schaeffer-Reiss C."/>
            <person name="Rompais M."/>
            <person name="Ayoub D."/>
            <person name="Lane L."/>
            <person name="Bairoch A."/>
            <person name="Van Dorsselaer A."/>
            <person name="Carapito C."/>
        </authorList>
    </citation>
    <scope>IDENTIFICATION BY MASS SPECTROMETRY [LARGE SCALE ANALYSIS]</scope>
</reference>
<protein>
    <recommendedName>
        <fullName evidence="11">Long-chain-fatty-acid--CoA ligase 1</fullName>
        <ecNumber evidence="7 8">6.2.1.3</ecNumber>
    </recommendedName>
    <alternativeName>
        <fullName>Acyl-CoA synthetase 1</fullName>
        <shortName>ACS1</shortName>
    </alternativeName>
    <alternativeName>
        <fullName>Arachidonate--CoA ligase</fullName>
        <ecNumber evidence="2">6.2.1.15</ecNumber>
    </alternativeName>
    <alternativeName>
        <fullName>Long-chain acyl-CoA synthetase 1</fullName>
        <shortName>LACS 1</shortName>
    </alternativeName>
    <alternativeName>
        <fullName>Long-chain acyl-CoA synthetase 2</fullName>
        <shortName>LACS 2</shortName>
    </alternativeName>
    <alternativeName>
        <fullName>Long-chain fatty acid-CoA ligase 2</fullName>
    </alternativeName>
    <alternativeName>
        <fullName>Palmitoyl-CoA ligase 1</fullName>
    </alternativeName>
    <alternativeName>
        <fullName>Palmitoyl-CoA ligase 2</fullName>
    </alternativeName>
    <alternativeName>
        <fullName>Phytanate--CoA ligase</fullName>
        <ecNumber evidence="2">6.2.1.24</ecNumber>
    </alternativeName>
</protein>
<name>ACSL1_HUMAN</name>
<keyword id="KW-0007">Acetylation</keyword>
<keyword id="KW-0025">Alternative splicing</keyword>
<keyword id="KW-0067">ATP-binding</keyword>
<keyword id="KW-0903">Direct protein sequencing</keyword>
<keyword id="KW-0256">Endoplasmic reticulum</keyword>
<keyword id="KW-0276">Fatty acid metabolism</keyword>
<keyword id="KW-0325">Glycoprotein</keyword>
<keyword id="KW-0436">Ligase</keyword>
<keyword id="KW-0443">Lipid metabolism</keyword>
<keyword id="KW-0460">Magnesium</keyword>
<keyword id="KW-0472">Membrane</keyword>
<keyword id="KW-0492">Microsome</keyword>
<keyword id="KW-0496">Mitochondrion</keyword>
<keyword id="KW-1000">Mitochondrion outer membrane</keyword>
<keyword id="KW-0944">Nitration</keyword>
<keyword id="KW-0547">Nucleotide-binding</keyword>
<keyword id="KW-0576">Peroxisome</keyword>
<keyword id="KW-0597">Phosphoprotein</keyword>
<keyword id="KW-1267">Proteomics identification</keyword>
<keyword id="KW-1185">Reference proteome</keyword>
<keyword id="KW-0735">Signal-anchor</keyword>
<keyword id="KW-0812">Transmembrane</keyword>
<keyword id="KW-1133">Transmembrane helix</keyword>
<proteinExistence type="evidence at protein level"/>
<organism>
    <name type="scientific">Homo sapiens</name>
    <name type="common">Human</name>
    <dbReference type="NCBI Taxonomy" id="9606"/>
    <lineage>
        <taxon>Eukaryota</taxon>
        <taxon>Metazoa</taxon>
        <taxon>Chordata</taxon>
        <taxon>Craniata</taxon>
        <taxon>Vertebrata</taxon>
        <taxon>Euteleostomi</taxon>
        <taxon>Mammalia</taxon>
        <taxon>Eutheria</taxon>
        <taxon>Euarchontoglires</taxon>
        <taxon>Primates</taxon>
        <taxon>Haplorrhini</taxon>
        <taxon>Catarrhini</taxon>
        <taxon>Hominidae</taxon>
        <taxon>Homo</taxon>
    </lineage>
</organism>
<accession>P33121</accession>
<accession>B7Z452</accession>
<accession>D3DP57</accession>
<accession>P41215</accession>
<accession>Q8N8V7</accession>
<accession>Q8TA99</accession>
<comment type="function">
    <text evidence="2 6 7 8">Catalyzes the conversion of long-chain fatty acids to their active form acyl-CoAs for both synthesis of cellular lipids, and degradation via beta-oxidation (PubMed:21242590, PubMed:22633490, PubMed:24269233). Preferentially uses palmitoleate, oleate and linoleate (PubMed:24269233). Preferentially activates arachidonate than epoxyeicosatrienoic acids (EETs) or hydroxyeicosatrienoic acids (HETEs) (By similarity).</text>
</comment>
<comment type="catalytic activity">
    <reaction evidence="7 8">
        <text>a long-chain fatty acid + ATP + CoA = a long-chain fatty acyl-CoA + AMP + diphosphate</text>
        <dbReference type="Rhea" id="RHEA:15421"/>
        <dbReference type="ChEBI" id="CHEBI:30616"/>
        <dbReference type="ChEBI" id="CHEBI:33019"/>
        <dbReference type="ChEBI" id="CHEBI:57287"/>
        <dbReference type="ChEBI" id="CHEBI:57560"/>
        <dbReference type="ChEBI" id="CHEBI:83139"/>
        <dbReference type="ChEBI" id="CHEBI:456215"/>
        <dbReference type="EC" id="6.2.1.3"/>
    </reaction>
    <physiologicalReaction direction="left-to-right" evidence="13 14">
        <dbReference type="Rhea" id="RHEA:15422"/>
    </physiologicalReaction>
</comment>
<comment type="catalytic activity">
    <reaction evidence="2">
        <text>(5Z,8Z,11Z,14Z)-eicosatetraenoate + ATP + CoA = (5Z,8Z,11Z,14Z)-eicosatetraenoyl-CoA + AMP + diphosphate</text>
        <dbReference type="Rhea" id="RHEA:19713"/>
        <dbReference type="ChEBI" id="CHEBI:30616"/>
        <dbReference type="ChEBI" id="CHEBI:32395"/>
        <dbReference type="ChEBI" id="CHEBI:33019"/>
        <dbReference type="ChEBI" id="CHEBI:57287"/>
        <dbReference type="ChEBI" id="CHEBI:57368"/>
        <dbReference type="ChEBI" id="CHEBI:456215"/>
        <dbReference type="EC" id="6.2.1.15"/>
    </reaction>
    <physiologicalReaction direction="left-to-right" evidence="2">
        <dbReference type="Rhea" id="RHEA:19714"/>
    </physiologicalReaction>
</comment>
<comment type="catalytic activity">
    <reaction evidence="2">
        <text>3,7,11,15-tetramethylhexadecanoate + ATP + CoA = phytanoyl-CoA + AMP + diphosphate</text>
        <dbReference type="Rhea" id="RHEA:21380"/>
        <dbReference type="ChEBI" id="CHEBI:30616"/>
        <dbReference type="ChEBI" id="CHEBI:33019"/>
        <dbReference type="ChEBI" id="CHEBI:37257"/>
        <dbReference type="ChEBI" id="CHEBI:57287"/>
        <dbReference type="ChEBI" id="CHEBI:57391"/>
        <dbReference type="ChEBI" id="CHEBI:456215"/>
        <dbReference type="EC" id="6.2.1.24"/>
    </reaction>
    <physiologicalReaction direction="left-to-right" evidence="2">
        <dbReference type="Rhea" id="RHEA:21381"/>
    </physiologicalReaction>
</comment>
<comment type="catalytic activity">
    <reaction evidence="6 8">
        <text>hexadecanoate + ATP + CoA = hexadecanoyl-CoA + AMP + diphosphate</text>
        <dbReference type="Rhea" id="RHEA:30751"/>
        <dbReference type="ChEBI" id="CHEBI:7896"/>
        <dbReference type="ChEBI" id="CHEBI:30616"/>
        <dbReference type="ChEBI" id="CHEBI:33019"/>
        <dbReference type="ChEBI" id="CHEBI:57287"/>
        <dbReference type="ChEBI" id="CHEBI:57379"/>
        <dbReference type="ChEBI" id="CHEBI:456215"/>
    </reaction>
    <physiologicalReaction direction="left-to-right" evidence="12 14">
        <dbReference type="Rhea" id="RHEA:30752"/>
    </physiologicalReaction>
</comment>
<comment type="catalytic activity">
    <reaction evidence="7 8">
        <text>(E)-hexadec-2-enoate + ATP + CoA = (2E)-hexadecenoyl-CoA + AMP + diphosphate</text>
        <dbReference type="Rhea" id="RHEA:36139"/>
        <dbReference type="ChEBI" id="CHEBI:30616"/>
        <dbReference type="ChEBI" id="CHEBI:33019"/>
        <dbReference type="ChEBI" id="CHEBI:57287"/>
        <dbReference type="ChEBI" id="CHEBI:61526"/>
        <dbReference type="ChEBI" id="CHEBI:72745"/>
        <dbReference type="ChEBI" id="CHEBI:456215"/>
    </reaction>
    <physiologicalReaction direction="left-to-right" evidence="13 14">
        <dbReference type="Rhea" id="RHEA:36140"/>
    </physiologicalReaction>
</comment>
<comment type="catalytic activity">
    <reaction evidence="2">
        <text>2,6,10,14-tetramethylpentadecanoate + ATP + CoA = pristanoyl-CoA + AMP + diphosphate</text>
        <dbReference type="Rhea" id="RHEA:47264"/>
        <dbReference type="ChEBI" id="CHEBI:30616"/>
        <dbReference type="ChEBI" id="CHEBI:33019"/>
        <dbReference type="ChEBI" id="CHEBI:57287"/>
        <dbReference type="ChEBI" id="CHEBI:77250"/>
        <dbReference type="ChEBI" id="CHEBI:77268"/>
        <dbReference type="ChEBI" id="CHEBI:456215"/>
    </reaction>
    <physiologicalReaction direction="left-to-right" evidence="2">
        <dbReference type="Rhea" id="RHEA:47265"/>
    </physiologicalReaction>
</comment>
<comment type="catalytic activity">
    <reaction evidence="2">
        <text>14,15-epoxy-(5Z,8Z,11Z)-eicosatrienoate + ATP + CoA = 14,15-epoxy-(5Z,8Z,11Z)-eicosatrienoyl-CoA + AMP + diphosphate</text>
        <dbReference type="Rhea" id="RHEA:52016"/>
        <dbReference type="ChEBI" id="CHEBI:30616"/>
        <dbReference type="ChEBI" id="CHEBI:33019"/>
        <dbReference type="ChEBI" id="CHEBI:57287"/>
        <dbReference type="ChEBI" id="CHEBI:84024"/>
        <dbReference type="ChEBI" id="CHEBI:136117"/>
        <dbReference type="ChEBI" id="CHEBI:456215"/>
    </reaction>
    <physiologicalReaction direction="left-to-right" evidence="2">
        <dbReference type="Rhea" id="RHEA:52017"/>
    </physiologicalReaction>
</comment>
<comment type="catalytic activity">
    <reaction evidence="2">
        <text>5-hydroxy-(6E,8Z,11Z,14Z)-eicosatetraenoate + ATP + CoA = 5-hydroxy-(6E,8Z,11Z,14Z)-eicosatetraenoyl-CoA + AMP + diphosphate</text>
        <dbReference type="Rhea" id="RHEA:52108"/>
        <dbReference type="ChEBI" id="CHEBI:30616"/>
        <dbReference type="ChEBI" id="CHEBI:33019"/>
        <dbReference type="ChEBI" id="CHEBI:57287"/>
        <dbReference type="ChEBI" id="CHEBI:65341"/>
        <dbReference type="ChEBI" id="CHEBI:136407"/>
        <dbReference type="ChEBI" id="CHEBI:456215"/>
    </reaction>
    <physiologicalReaction direction="left-to-right" evidence="2">
        <dbReference type="Rhea" id="RHEA:52109"/>
    </physiologicalReaction>
</comment>
<comment type="catalytic activity">
    <reaction evidence="2">
        <text>12-hydroxy-(5Z,8Z,10E,14Z)-eicosatetraenoate + ATP + CoA = 12-hydroxy-(5Z,8Z,10E,14Z)-eicosatetraenoyl-CoA + AMP + diphosphate</text>
        <dbReference type="Rhea" id="RHEA:52112"/>
        <dbReference type="ChEBI" id="CHEBI:30616"/>
        <dbReference type="ChEBI" id="CHEBI:33019"/>
        <dbReference type="ChEBI" id="CHEBI:57287"/>
        <dbReference type="ChEBI" id="CHEBI:90718"/>
        <dbReference type="ChEBI" id="CHEBI:136408"/>
        <dbReference type="ChEBI" id="CHEBI:456215"/>
    </reaction>
    <physiologicalReaction direction="left-to-right" evidence="2">
        <dbReference type="Rhea" id="RHEA:52113"/>
    </physiologicalReaction>
</comment>
<comment type="catalytic activity">
    <reaction evidence="2">
        <text>15-hydroxy-(5Z,8Z,11Z,13E)-eicosatetraenoate + ATP + CoA = 15-hydroxy-(5Z,8Z,11Z,13E)-eicosatetraenoyl-CoA + AMP + diphosphate</text>
        <dbReference type="Rhea" id="RHEA:52116"/>
        <dbReference type="ChEBI" id="CHEBI:30616"/>
        <dbReference type="ChEBI" id="CHEBI:33019"/>
        <dbReference type="ChEBI" id="CHEBI:57287"/>
        <dbReference type="ChEBI" id="CHEBI:78832"/>
        <dbReference type="ChEBI" id="CHEBI:136409"/>
        <dbReference type="ChEBI" id="CHEBI:456215"/>
    </reaction>
    <physiologicalReaction direction="left-to-right" evidence="2">
        <dbReference type="Rhea" id="RHEA:52117"/>
    </physiologicalReaction>
</comment>
<comment type="catalytic activity">
    <reaction evidence="6">
        <text>(9Z)-octadecenoate + ATP + CoA = (9Z)-octadecenoyl-CoA + AMP + diphosphate</text>
        <dbReference type="Rhea" id="RHEA:33607"/>
        <dbReference type="ChEBI" id="CHEBI:30616"/>
        <dbReference type="ChEBI" id="CHEBI:30823"/>
        <dbReference type="ChEBI" id="CHEBI:33019"/>
        <dbReference type="ChEBI" id="CHEBI:57287"/>
        <dbReference type="ChEBI" id="CHEBI:57387"/>
        <dbReference type="ChEBI" id="CHEBI:456215"/>
    </reaction>
    <physiologicalReaction direction="left-to-right" evidence="12">
        <dbReference type="Rhea" id="RHEA:33608"/>
    </physiologicalReaction>
</comment>
<comment type="cofactor">
    <cofactor>
        <name>Mg(2+)</name>
        <dbReference type="ChEBI" id="CHEBI:18420"/>
    </cofactor>
</comment>
<comment type="activity regulation">
    <text evidence="2">Inhibited at high temperature and by arachidonate.</text>
</comment>
<comment type="subcellular location">
    <subcellularLocation>
        <location evidence="1">Mitochondrion outer membrane</location>
        <topology evidence="1">Single-pass type III membrane protein</topology>
    </subcellularLocation>
    <subcellularLocation>
        <location evidence="1">Peroxisome membrane</location>
        <topology evidence="1">Single-pass type III membrane protein</topology>
    </subcellularLocation>
    <subcellularLocation>
        <location evidence="1">Microsome membrane</location>
        <topology evidence="1">Single-pass type III membrane protein</topology>
    </subcellularLocation>
    <subcellularLocation>
        <location evidence="8">Endoplasmic reticulum membrane</location>
        <topology evidence="1">Single-pass type III membrane protein</topology>
    </subcellularLocation>
</comment>
<comment type="alternative products">
    <event type="alternative splicing"/>
    <isoform>
        <id>P33121-1</id>
        <name>1</name>
        <sequence type="displayed"/>
    </isoform>
    <isoform>
        <id>P33121-2</id>
        <name>2</name>
        <sequence type="described" ref="VSP_009604"/>
    </isoform>
    <isoform>
        <id>P33121-3</id>
        <name>3</name>
        <sequence type="described" ref="VSP_054391"/>
    </isoform>
</comment>
<comment type="tissue specificity">
    <text evidence="5">Highly expressed in liver, heart, skeletal muscle, kidney and erythroid cells, and to a lesser extent in brain, lung, placenta and pancreas.</text>
</comment>
<comment type="developmental stage">
    <text>Expressed during the early stages of erythroid development while expression is very low in reticulocytes and young erythrocytes.</text>
</comment>
<comment type="miscellaneous">
    <molecule>Isoform 2</molecule>
    <text evidence="11">May be due to a competing acceptor splice site.</text>
</comment>
<comment type="similarity">
    <text evidence="11">Belongs to the ATP-dependent AMP-binding enzyme family.</text>
</comment>
<comment type="sequence caution" evidence="11">
    <conflict type="erroneous initiation">
        <sequence resource="EMBL-CDS" id="BAC04704"/>
    </conflict>
</comment>
<evidence type="ECO:0000250" key="1"/>
<evidence type="ECO:0000250" key="2">
    <source>
        <dbReference type="UniProtKB" id="P18163"/>
    </source>
</evidence>
<evidence type="ECO:0000250" key="3">
    <source>
        <dbReference type="UniProtKB" id="P41216"/>
    </source>
</evidence>
<evidence type="ECO:0000255" key="4"/>
<evidence type="ECO:0000269" key="5">
    <source>
    </source>
</evidence>
<evidence type="ECO:0000269" key="6">
    <source>
    </source>
</evidence>
<evidence type="ECO:0000269" key="7">
    <source>
    </source>
</evidence>
<evidence type="ECO:0000269" key="8">
    <source>
    </source>
</evidence>
<evidence type="ECO:0000269" key="9">
    <source ref="7"/>
</evidence>
<evidence type="ECO:0000303" key="10">
    <source>
    </source>
</evidence>
<evidence type="ECO:0000305" key="11"/>
<evidence type="ECO:0000305" key="12">
    <source>
    </source>
</evidence>
<evidence type="ECO:0000305" key="13">
    <source>
    </source>
</evidence>
<evidence type="ECO:0000305" key="14">
    <source>
    </source>
</evidence>
<evidence type="ECO:0000312" key="15">
    <source>
        <dbReference type="HGNC" id="HGNC:3569"/>
    </source>
</evidence>
<evidence type="ECO:0007744" key="16">
    <source>
    </source>
</evidence>
<sequence length="698" mass="77943">MQAHELFRYFRMPELVDFRQYVRTLPTNTLMGFGAFAALTTFWYATRPKPLKPPCDLSMQSVEVAGSGGARRSALLDSDEPLVYFYDDVTTLYEGFQRGIQVSNNGPCLGSRKPDQPYEWLSYKQVAELSECIGSALIQKGFKTAPDQFIGIFAQNRPEWVIIEQGCFAYSMVIVPLYDTLGNEAITYIVNKAELSLVFVDKPEKAKLLLEGVENKLIPGLKIIVVMDAYGSELVERGQRCGVEVTSMKAMEDLGRANRRKPKPPAPEDLAVICFTSGTTGNPKGAMVTHRNIVSDCSAFVKATENTVNPCPDDTLISFLPLAHMFERVVECVMLCHGAKIGFFQGDIRLLMDDLKVLQPTVFPVVPRLLNRMFDRIFGQANTTLKRWLLDFASKRKEAELRSGIIRNNSLWDRLIFHKVQSSLGGRVRLMVTGAAPVSATVLTFLRAALGCQFYEGYGQTECTAGCCLTMPGDWTAGHVGAPMPCNLIKLVDVEEMNYMAAEGEGEVCVKGPNVFQGYLKDPAKTAEALDKDGWLHTGDIGKWLPNGTLKIIDRKKHIFKLAQGEYIAPEKIENIYMRSEPVAQVFVHGESLQAFLIAIVVPDVETLCSWAQKRGFEGSFEELCRNKDVKKAILEDMVRLGKDSGLKPFEQVKGITLHPELFSIDNGLLTPTMKAKRPELRNYFRSQIDDLYSTIKV</sequence>
<feature type="chain" id="PRO_0000193104" description="Long-chain-fatty-acid--CoA ligase 1">
    <location>
        <begin position="1"/>
        <end position="698"/>
    </location>
</feature>
<feature type="transmembrane region" description="Helical; Signal-anchor for type III membrane protein" evidence="4">
    <location>
        <begin position="25"/>
        <end position="45"/>
    </location>
</feature>
<feature type="topological domain" description="Cytoplasmic" evidence="4">
    <location>
        <begin position="46"/>
        <end position="698"/>
    </location>
</feature>
<feature type="modified residue" description="N-acetylmethionine" evidence="9">
    <location>
        <position position="1"/>
    </location>
</feature>
<feature type="modified residue" description="3'-nitrotyrosine" evidence="2">
    <location>
        <position position="9"/>
    </location>
</feature>
<feature type="modified residue" description="Phosphotyrosine" evidence="2">
    <location>
        <position position="84"/>
    </location>
</feature>
<feature type="modified residue" description="N6-acetyllysine" evidence="3">
    <location>
        <position position="207"/>
    </location>
</feature>
<feature type="modified residue" description="N6-acetyllysine" evidence="3">
    <location>
        <position position="356"/>
    </location>
</feature>
<feature type="modified residue" description="N6-acetyllysine" evidence="3">
    <location>
        <position position="386"/>
    </location>
</feature>
<feature type="modified residue" description="Phosphoserine" evidence="16">
    <location>
        <position position="620"/>
    </location>
</feature>
<feature type="modified residue" description="N6-acetyllysine" evidence="2">
    <location>
        <position position="632"/>
    </location>
</feature>
<feature type="glycosylation site" description="O-linked (GlcNAc) serine" evidence="1">
    <location>
        <position position="135"/>
    </location>
</feature>
<feature type="splice variant" id="VSP_054391" description="In isoform 3." evidence="10">
    <original>NTVNPCPDDTLISFLPLAHMFERVVE</original>
    <variation>KALPLSASDTHISYLPLAHIYEQLLK</variation>
    <location>
        <begin position="306"/>
        <end position="331"/>
    </location>
</feature>
<feature type="splice variant" id="VSP_009604" description="In isoform 2." evidence="10">
    <location>
        <begin position="508"/>
        <end position="517"/>
    </location>
</feature>
<feature type="sequence conflict" description="In Ref. 2; AAB00959." evidence="11" ref="2">
    <original>YVR</original>
    <variation>CV</variation>
    <location>
        <begin position="21"/>
        <end position="23"/>
    </location>
</feature>
<feature type="sequence conflict" description="In Ref. 2; AAB00959." evidence="11" ref="2">
    <original>AA</original>
    <variation>SRR</variation>
    <location>
        <begin position="37"/>
        <end position="38"/>
    </location>
</feature>
<feature type="sequence conflict" description="In Ref. 2; AAB00959." evidence="11" ref="2">
    <original>YATR</original>
    <variation>RPRH</variation>
    <location>
        <begin position="44"/>
        <end position="47"/>
    </location>
</feature>
<feature type="sequence conflict" description="In Ref. 2; AAB00959." evidence="11" ref="2">
    <original>CD</original>
    <variation>WH</variation>
    <location>
        <begin position="55"/>
        <end position="56"/>
    </location>
</feature>
<feature type="sequence conflict" description="In Ref. 2; AAB00959." evidence="11" ref="2">
    <original>A</original>
    <variation>S</variation>
    <location>
        <position position="229"/>
    </location>
</feature>
<feature type="sequence conflict" description="In Ref. 2; AAB00959." evidence="11" ref="2">
    <original>L</original>
    <variation>V</variation>
    <location>
        <position position="385"/>
    </location>
</feature>
<feature type="sequence conflict" description="In Ref. 2; AAB00959." evidence="11" ref="2">
    <original>EL</original>
    <variation>DV</variation>
    <location>
        <begin position="400"/>
        <end position="401"/>
    </location>
</feature>
<feature type="sequence conflict" description="In Ref. 2; AAB00959." evidence="11" ref="2">
    <original>A</original>
    <variation>T</variation>
    <location>
        <position position="477"/>
    </location>
</feature>
<feature type="sequence conflict" description="In Ref. 2; AAB00959." evidence="11" ref="2">
    <original>VDV</original>
    <variation>GWQL</variation>
    <location>
        <begin position="492"/>
        <end position="494"/>
    </location>
</feature>
<feature type="sequence conflict" description="In Ref. 2; AAB00959." evidence="11" ref="2">
    <original>A</original>
    <variation>S</variation>
    <location>
        <position position="502"/>
    </location>
</feature>
<feature type="sequence conflict" description="In Ref. 2; AAB00959." evidence="11" ref="2">
    <original>T</original>
    <variation>I</variation>
    <location>
        <position position="695"/>
    </location>
</feature>
<gene>
    <name evidence="15" type="primary">ACSL1</name>
    <name type="synonym">FACL1</name>
    <name type="synonym">FACL2</name>
    <name type="synonym">LACS</name>
    <name type="synonym">LACS1</name>
    <name type="synonym">LACS2</name>
</gene>